<organismHost>
    <name type="scientific">Cucumis sativus</name>
    <name type="common">Cucumber</name>
    <dbReference type="NCBI Taxonomy" id="3659"/>
</organismHost>
<organismHost>
    <name type="scientific">Solanum lycopersicum</name>
    <name type="common">Tomato</name>
    <name type="synonym">Lycopersicon esculentum</name>
    <dbReference type="NCBI Taxonomy" id="4081"/>
</organismHost>
<organismHost>
    <name type="scientific">Spinacia oleracea</name>
    <name type="common">Spinach</name>
    <dbReference type="NCBI Taxonomy" id="3562"/>
</organismHost>
<evidence type="ECO:0000250" key="1"/>
<evidence type="ECO:0000256" key="2">
    <source>
        <dbReference type="SAM" id="MobiDB-lite"/>
    </source>
</evidence>
<evidence type="ECO:0000305" key="3"/>
<keyword id="KW-0007">Acetylation</keyword>
<keyword id="KW-0167">Capsid protein</keyword>
<keyword id="KW-0687">Ribonucleoprotein</keyword>
<keyword id="KW-0694">RNA-binding</keyword>
<keyword id="KW-1142">T=3 icosahedral capsid protein</keyword>
<keyword id="KW-0543">Viral nucleoprotein</keyword>
<keyword id="KW-0946">Virion</keyword>
<proteinExistence type="inferred from homology"/>
<comment type="function">
    <text evidence="1">Capsid protein. Probably binds RNA and plays a role in packaging (By similarity).</text>
</comment>
<comment type="subcellular location">
    <subcellularLocation>
        <location evidence="3">Virion</location>
    </subcellularLocation>
</comment>
<comment type="domain">
    <text evidence="1">The N-terminal arginine-rich stretch does not seem to be the major RNA-binding region that allows formation of an infectious ribonucleoprotein complex.</text>
</comment>
<comment type="similarity">
    <text evidence="3">Belongs to the cucumovirus capsid protein family.</text>
</comment>
<dbReference type="EMBL" id="D42079">
    <property type="protein sequence ID" value="BAA07675.1"/>
    <property type="molecule type" value="Genomic_RNA"/>
</dbReference>
<dbReference type="SMR" id="O40983"/>
<dbReference type="GO" id="GO:1990904">
    <property type="term" value="C:ribonucleoprotein complex"/>
    <property type="evidence" value="ECO:0007669"/>
    <property type="project" value="UniProtKB-KW"/>
</dbReference>
<dbReference type="GO" id="GO:0039617">
    <property type="term" value="C:T=3 icosahedral viral capsid"/>
    <property type="evidence" value="ECO:0007669"/>
    <property type="project" value="UniProtKB-KW"/>
</dbReference>
<dbReference type="GO" id="GO:0019013">
    <property type="term" value="C:viral nucleocapsid"/>
    <property type="evidence" value="ECO:0007669"/>
    <property type="project" value="UniProtKB-KW"/>
</dbReference>
<dbReference type="GO" id="GO:0003723">
    <property type="term" value="F:RNA binding"/>
    <property type="evidence" value="ECO:0007669"/>
    <property type="project" value="UniProtKB-KW"/>
</dbReference>
<dbReference type="GO" id="GO:0005198">
    <property type="term" value="F:structural molecule activity"/>
    <property type="evidence" value="ECO:0007669"/>
    <property type="project" value="InterPro"/>
</dbReference>
<dbReference type="Gene3D" id="2.60.120.530">
    <property type="entry name" value="Cucumovirus coat protein, subunit A"/>
    <property type="match status" value="1"/>
</dbReference>
<dbReference type="InterPro" id="IPR000247">
    <property type="entry name" value="Cucumovirus_coat"/>
</dbReference>
<dbReference type="InterPro" id="IPR037137">
    <property type="entry name" value="Cucumovirus_coat_Asu_sf"/>
</dbReference>
<dbReference type="Pfam" id="PF00760">
    <property type="entry name" value="Cucumo_coat"/>
    <property type="match status" value="1"/>
</dbReference>
<dbReference type="PRINTS" id="PR00222">
    <property type="entry name" value="CUCUMOCOAT"/>
</dbReference>
<dbReference type="SUPFAM" id="SSF88633">
    <property type="entry name" value="Positive stranded ssRNA viruses"/>
    <property type="match status" value="1"/>
</dbReference>
<gene>
    <name type="ORF">ORF3b</name>
</gene>
<protein>
    <recommendedName>
        <fullName>Capsid protein</fullName>
        <shortName>CP</shortName>
    </recommendedName>
    <alternativeName>
        <fullName>Coat protein</fullName>
    </alternativeName>
</protein>
<feature type="chain" id="PRO_0000083199" description="Capsid protein">
    <location>
        <begin position="1"/>
        <end position="218"/>
    </location>
</feature>
<feature type="region of interest" description="Disordered" evidence="2">
    <location>
        <begin position="1"/>
        <end position="28"/>
    </location>
</feature>
<feature type="compositionally biased region" description="Basic residues" evidence="2">
    <location>
        <begin position="11"/>
        <end position="21"/>
    </location>
</feature>
<feature type="modified residue" description="N-acetylmethionine; by host" evidence="1">
    <location>
        <position position="1"/>
    </location>
</feature>
<reference key="1">
    <citation type="journal article" date="1996" name="Nihon Shokubutsu Byori Gakkaiho">
        <title>Six new subgroup I members of Japanese cucumber mosaic virus as determined by nucleotide sequence analysis on RNA3's cDNAs.</title>
        <authorList>
            <person name="Chaumpluk P."/>
            <person name="Sasaki Y."/>
            <person name="Nakajima N."/>
            <person name="Nagano H."/>
            <person name="Nakamura I."/>
            <person name="Suzuki K."/>
            <person name="Mise K."/>
            <person name="Inouye N."/>
            <person name="Okuno T."/>
            <person name="Furusawa I."/>
        </authorList>
    </citation>
    <scope>NUCLEOTIDE SEQUENCE [GENOMIC RNA]</scope>
</reference>
<name>CAPSD_CMVC7</name>
<organism>
    <name type="scientific">Cucumber mosaic virus (strain C7-2)</name>
    <name type="common">CMV</name>
    <dbReference type="NCBI Taxonomy" id="117117"/>
    <lineage>
        <taxon>Viruses</taxon>
        <taxon>Riboviria</taxon>
        <taxon>Orthornavirae</taxon>
        <taxon>Kitrinoviricota</taxon>
        <taxon>Alsuviricetes</taxon>
        <taxon>Martellivirales</taxon>
        <taxon>Bromoviridae</taxon>
        <taxon>Cucumovirus</taxon>
        <taxon>Cucumber mosaic virus</taxon>
    </lineage>
</organism>
<sequence length="218" mass="24033">MDKSESTSAGRNRRRRPRRGSRSAPSSADANFRVLSQQLSRLNKTLAAGRPTINHPTFVGSERCKPGYTFSSITLKPPKIDRGSYYGKRLLLPDSVTEFDKKLVSRIQIRVNPLPKFDSTVWVTVRKVPASSDLSVAAISAMFADGASPVLVNQYAASGVQANNKLLYDLSAMRADIGDMRKYAVLVYSKDDALETDELVLHVDIEHQRIPTSGVLPV</sequence>
<accession>O40983</accession>